<reference key="1">
    <citation type="journal article" date="1999" name="Antimicrob. Agents Chemother.">
        <title>Cloning and nucleotide sequence determination of the entire mec DNA of pre-methicillin-resistant Staphylococcus aureus N315.</title>
        <authorList>
            <person name="Ito T."/>
            <person name="Katayama Y."/>
            <person name="Hiramatsu K."/>
        </authorList>
    </citation>
    <scope>NUCLEOTIDE SEQUENCE [GENOMIC DNA]</scope>
</reference>
<reference key="2">
    <citation type="journal article" date="2001" name="Lancet">
        <title>Whole genome sequencing of meticillin-resistant Staphylococcus aureus.</title>
        <authorList>
            <person name="Kuroda M."/>
            <person name="Ohta T."/>
            <person name="Uchiyama I."/>
            <person name="Baba T."/>
            <person name="Yuzawa H."/>
            <person name="Kobayashi I."/>
            <person name="Cui L."/>
            <person name="Oguchi A."/>
            <person name="Aoki K."/>
            <person name="Nagai Y."/>
            <person name="Lian J.-Q."/>
            <person name="Ito T."/>
            <person name="Kanamori M."/>
            <person name="Matsumaru H."/>
            <person name="Maruyama A."/>
            <person name="Murakami H."/>
            <person name="Hosoyama A."/>
            <person name="Mizutani-Ui Y."/>
            <person name="Takahashi N.K."/>
            <person name="Sawano T."/>
            <person name="Inoue R."/>
            <person name="Kaito C."/>
            <person name="Sekimizu K."/>
            <person name="Hirakawa H."/>
            <person name="Kuhara S."/>
            <person name="Goto S."/>
            <person name="Yabuzaki J."/>
            <person name="Kanehisa M."/>
            <person name="Yamashita A."/>
            <person name="Oshima K."/>
            <person name="Furuya K."/>
            <person name="Yoshino C."/>
            <person name="Shiba T."/>
            <person name="Hattori M."/>
            <person name="Ogasawara N."/>
            <person name="Hayashi H."/>
            <person name="Hiramatsu K."/>
        </authorList>
    </citation>
    <scope>NUCLEOTIDE SEQUENCE [LARGE SCALE GENOMIC DNA]</scope>
    <source>
        <strain>N315</strain>
    </source>
</reference>
<comment type="function">
    <text evidence="1">One of three proteins encoded by transposon Tn554 required for its transposition.</text>
</comment>
<comment type="similarity">
    <text evidence="4">Belongs to the 'phage' integrase family.</text>
</comment>
<organism>
    <name type="scientific">Staphylococcus aureus (strain N315)</name>
    <dbReference type="NCBI Taxonomy" id="158879"/>
    <lineage>
        <taxon>Bacteria</taxon>
        <taxon>Bacillati</taxon>
        <taxon>Bacillota</taxon>
        <taxon>Bacilli</taxon>
        <taxon>Bacillales</taxon>
        <taxon>Staphylococcaceae</taxon>
        <taxon>Staphylococcus</taxon>
    </lineage>
</organism>
<accession>P0A051</accession>
<accession>P06696</accession>
<proteinExistence type="inferred from homology"/>
<gene>
    <name type="primary">tnpA1</name>
    <name type="ordered locus">SA0052</name>
</gene>
<gene>
    <name type="primary">tnpA2</name>
    <name type="ordered locus">SA1484</name>
</gene>
<gene>
    <name type="primary">tnpA3</name>
    <name type="ordered locus">SA0762</name>
</gene>
<gene>
    <name type="primary">tnpA4</name>
    <name type="ordered locus">SA1955</name>
</gene>
<gene>
    <name type="primary">tnpA5</name>
    <name type="ordered locus">SA2388</name>
</gene>
<name>TNPA_STAAN</name>
<dbReference type="EMBL" id="D86934">
    <property type="protein sequence ID" value="BAA82201.1"/>
    <property type="molecule type" value="Genomic_DNA"/>
</dbReference>
<dbReference type="EMBL" id="BA000018">
    <property type="protein sequence ID" value="BAB41270.1"/>
    <property type="molecule type" value="Genomic_DNA"/>
</dbReference>
<dbReference type="EMBL" id="BA000018">
    <property type="protein sequence ID" value="BAB41999.1"/>
    <property type="molecule type" value="Genomic_DNA"/>
</dbReference>
<dbReference type="EMBL" id="BA000018">
    <property type="protein sequence ID" value="BAB42750.1"/>
    <property type="molecule type" value="Genomic_DNA"/>
</dbReference>
<dbReference type="EMBL" id="BA000018">
    <property type="protein sequence ID" value="BAB43239.1"/>
    <property type="molecule type" value="Genomic_DNA"/>
</dbReference>
<dbReference type="EMBL" id="BA000018">
    <property type="protein sequence ID" value="BAB43693.1"/>
    <property type="molecule type" value="Genomic_DNA"/>
</dbReference>
<dbReference type="RefSeq" id="WP_000868132.1">
    <property type="nucleotide sequence ID" value="NC_002745.2"/>
</dbReference>
<dbReference type="SMR" id="P0A051"/>
<dbReference type="EnsemblBacteria" id="BAB41270">
    <property type="protein sequence ID" value="BAB41270"/>
    <property type="gene ID" value="BAB41270"/>
</dbReference>
<dbReference type="EnsemblBacteria" id="BAB41999">
    <property type="protein sequence ID" value="BAB41999"/>
    <property type="gene ID" value="BAB41999"/>
</dbReference>
<dbReference type="EnsemblBacteria" id="BAB42750">
    <property type="protein sequence ID" value="BAB42750"/>
    <property type="gene ID" value="BAB42750"/>
</dbReference>
<dbReference type="EnsemblBacteria" id="BAB43239">
    <property type="protein sequence ID" value="BAB43239"/>
    <property type="gene ID" value="BAB43239"/>
</dbReference>
<dbReference type="EnsemblBacteria" id="BAB43693">
    <property type="protein sequence ID" value="BAB43693"/>
    <property type="gene ID" value="BAB43693"/>
</dbReference>
<dbReference type="KEGG" id="sau:SA0052"/>
<dbReference type="KEGG" id="sau:SA0762"/>
<dbReference type="KEGG" id="sau:SA1484"/>
<dbReference type="KEGG" id="sau:SA1955"/>
<dbReference type="KEGG" id="sau:SA2388"/>
<dbReference type="HOGENOM" id="CLU_027562_9_6_9"/>
<dbReference type="GO" id="GO:0003677">
    <property type="term" value="F:DNA binding"/>
    <property type="evidence" value="ECO:0007669"/>
    <property type="project" value="UniProtKB-KW"/>
</dbReference>
<dbReference type="GO" id="GO:0015074">
    <property type="term" value="P:DNA integration"/>
    <property type="evidence" value="ECO:0007669"/>
    <property type="project" value="UniProtKB-KW"/>
</dbReference>
<dbReference type="GO" id="GO:0006310">
    <property type="term" value="P:DNA recombination"/>
    <property type="evidence" value="ECO:0007669"/>
    <property type="project" value="UniProtKB-KW"/>
</dbReference>
<dbReference type="CDD" id="cd01186">
    <property type="entry name" value="INT_tnpA_C_Tn554"/>
    <property type="match status" value="1"/>
</dbReference>
<dbReference type="Gene3D" id="1.10.150.130">
    <property type="match status" value="1"/>
</dbReference>
<dbReference type="Gene3D" id="1.10.443.10">
    <property type="entry name" value="Intergrase catalytic core"/>
    <property type="match status" value="1"/>
</dbReference>
<dbReference type="InterPro" id="IPR044068">
    <property type="entry name" value="CB"/>
</dbReference>
<dbReference type="InterPro" id="IPR011010">
    <property type="entry name" value="DNA_brk_join_enz"/>
</dbReference>
<dbReference type="InterPro" id="IPR042721">
    <property type="entry name" value="INT_tnpA_C_Tn554"/>
</dbReference>
<dbReference type="InterPro" id="IPR013762">
    <property type="entry name" value="Integrase-like_cat_sf"/>
</dbReference>
<dbReference type="InterPro" id="IPR002104">
    <property type="entry name" value="Integrase_catalytic"/>
</dbReference>
<dbReference type="InterPro" id="IPR010998">
    <property type="entry name" value="Integrase_recombinase_N"/>
</dbReference>
<dbReference type="InterPro" id="IPR004107">
    <property type="entry name" value="Integrase_SAM-like_N"/>
</dbReference>
<dbReference type="InterPro" id="IPR050090">
    <property type="entry name" value="Tyrosine_recombinase_XerCD"/>
</dbReference>
<dbReference type="PANTHER" id="PTHR30349:SF41">
    <property type="entry name" value="INTEGRASE_RECOMBINASE PROTEIN MJ0367-RELATED"/>
    <property type="match status" value="1"/>
</dbReference>
<dbReference type="PANTHER" id="PTHR30349">
    <property type="entry name" value="PHAGE INTEGRASE-RELATED"/>
    <property type="match status" value="1"/>
</dbReference>
<dbReference type="Pfam" id="PF02899">
    <property type="entry name" value="Phage_int_SAM_1"/>
    <property type="match status" value="1"/>
</dbReference>
<dbReference type="Pfam" id="PF00589">
    <property type="entry name" value="Phage_integrase"/>
    <property type="match status" value="1"/>
</dbReference>
<dbReference type="SUPFAM" id="SSF56349">
    <property type="entry name" value="DNA breaking-rejoining enzymes"/>
    <property type="match status" value="1"/>
</dbReference>
<dbReference type="PROSITE" id="PS51900">
    <property type="entry name" value="CB"/>
    <property type="match status" value="1"/>
</dbReference>
<dbReference type="PROSITE" id="PS51898">
    <property type="entry name" value="TYR_RECOMBINASE"/>
    <property type="match status" value="1"/>
</dbReference>
<feature type="chain" id="PRO_0000197551" description="Transposase A from transposon Tn554">
    <location>
        <begin position="1"/>
        <end position="361"/>
    </location>
</feature>
<feature type="domain" description="Core-binding (CB)" evidence="3">
    <location>
        <begin position="23"/>
        <end position="120"/>
    </location>
</feature>
<feature type="domain" description="Tyr recombinase" evidence="2">
    <location>
        <begin position="163"/>
        <end position="351"/>
    </location>
</feature>
<feature type="active site" evidence="2">
    <location>
        <position position="198"/>
    </location>
</feature>
<feature type="active site" evidence="2">
    <location>
        <position position="232"/>
    </location>
</feature>
<feature type="active site" evidence="2">
    <location>
        <position position="302"/>
    </location>
</feature>
<feature type="active site" evidence="2">
    <location>
        <position position="305"/>
    </location>
</feature>
<feature type="active site" evidence="2">
    <location>
        <position position="328"/>
    </location>
</feature>
<feature type="active site" description="O-(3'-phospho-DNA)-tyrosine intermediate" evidence="2">
    <location>
        <position position="338"/>
    </location>
</feature>
<evidence type="ECO:0000250" key="1"/>
<evidence type="ECO:0000255" key="2">
    <source>
        <dbReference type="PROSITE-ProRule" id="PRU01246"/>
    </source>
</evidence>
<evidence type="ECO:0000255" key="3">
    <source>
        <dbReference type="PROSITE-ProRule" id="PRU01248"/>
    </source>
</evidence>
<evidence type="ECO:0000305" key="4"/>
<keyword id="KW-0229">DNA integration</keyword>
<keyword id="KW-0233">DNA recombination</keyword>
<keyword id="KW-0238">DNA-binding</keyword>
<keyword id="KW-0814">Transposable element</keyword>
<sequence length="361" mass="42941">MKVQRIEVENKPYPLYLLLDKEYQLIEPVMKFIKYLDNTGKSPNTIKAYCYHLKLLYEFMEQRGVILNDINFELLADFVGWLRYPSASNVIDLQSKKAIREETTVNTILNVVMSFLDYLSRLGEFKSIDVFKQAKGRNFKGFLHHVNKGRYQKNVLKLRVKKKQIRTLRSKEVKQIIDACHTKRDKLILMLMYEGGLRIGEVLSLRLEDIVTWDNQIHLTPRDVNVNEAYIKLRKERTIHVSKELMSLYTDYLIYEYSEELEHDYVFISLKEGYFGKPLKYQSVLDLVRRIVKRTGIEFTSHMLRHTHATQLIREGWDVAFVQKRLGHAHVQTTLNTYVHLSDQDMKNEFNKYLERKEHKK</sequence>
<protein>
    <recommendedName>
        <fullName>Transposase A from transposon Tn554</fullName>
    </recommendedName>
</protein>